<comment type="function">
    <text evidence="1">Variant histone H2A which replaces conventional H2A in a subset of nucleosomes. Nucleosomes wrap and compact DNA into chromatin, limiting DNA accessibility to the cellular machineries which require DNA as a template. Histones thereby play a central role in transcription regulation, DNA repair, DNA replication and chromosomal stability. DNA accessibility is regulated via a complex set of post-translational modifications of histones, also called histone code, and nucleosome remodeling. Required for checkpoint-mediated arrest of cell cycle progression in response to low doses of ionizing radiation and for efficient repair of DNA double strand breaks (DSBs) specifically when modified by C-terminal phosphorylation (By similarity).</text>
</comment>
<comment type="subunit">
    <text evidence="1">The nucleosome is a histone octamer containing two molecules each of H2A, H2B, H3 and H4 assembled in one H3-H4 heterotetramer and two H2A-H2B heterodimers. The octamer wraps approximately 147 bp of DNA. Interacts with numerous proteins required for DNA damage signaling and repair when phosphorylated on Ser-135 (By similarity).</text>
</comment>
<comment type="subcellular location">
    <subcellularLocation>
        <location evidence="1">Nucleus</location>
    </subcellularLocation>
    <subcellularLocation>
        <location evidence="1">Chromosome</location>
    </subcellularLocation>
</comment>
<comment type="domain">
    <text>The [ST]-Q motif constitutes a recognition sequence for kinases from the PI3/PI4-kinase family.</text>
</comment>
<comment type="PTM">
    <text evidence="1">Phosphorylated to form H2AXS139ph (gamma-H2AX) in response to DNA double strand breaks (DSBs) generated by exogenous genotoxic agents and by stalled replication forks, and may also occur during meiotic recombination events. Phosphorylation can extend up to several thousand nucleosomes from the actual site of the DSB and may mark the surrounding chromatin for recruitment of proteins required for DNA damage signaling and repair. Widespread phosphorylation may also serve to amplify the damage signal or aid repair of persistent lesions. H2AXS139ph in response to ionizing radiation is mediated by ATM while defects in DNA replication induce H2AXS139ph subsequent to activation of ATR. Dephosphorylation of H2AXS139ph by PP2A is required for DNA DSB repair (By similarity).</text>
</comment>
<comment type="similarity">
    <text evidence="3">Belongs to the histone H2A family.</text>
</comment>
<comment type="caution">
    <text evidence="3">To ensure consistency between histone entries, we follow the 'Brno' nomenclature for histone modifications, with positions referring to those used in the literature for the 'closest' model organism. Due to slight variations in histone sequences between organisms and to the presence of initiator methionine in UniProtKB/Swiss-Prot sequences, the actual positions of modified amino acids in the sequence generally differ. In this entry the following conventions are used: H2AXS139ph = phosphorylated Ser-135.</text>
</comment>
<proteinExistence type="inferred from homology"/>
<evidence type="ECO:0000250" key="1"/>
<evidence type="ECO:0000256" key="2">
    <source>
        <dbReference type="SAM" id="MobiDB-lite"/>
    </source>
</evidence>
<evidence type="ECO:0000305" key="3"/>
<protein>
    <recommendedName>
        <fullName>Probable histone H2AXb</fullName>
    </recommendedName>
</protein>
<feature type="chain" id="PRO_0000296128" description="Probable histone H2AXb">
    <location>
        <begin position="1"/>
        <end position="138"/>
    </location>
</feature>
<feature type="region of interest" description="Disordered" evidence="2">
    <location>
        <begin position="1"/>
        <end position="24"/>
    </location>
</feature>
<feature type="short sequence motif" description="[ST]-Q motif">
    <location>
        <begin position="135"/>
        <end position="136"/>
    </location>
</feature>
<feature type="compositionally biased region" description="Gly residues" evidence="2">
    <location>
        <begin position="1"/>
        <end position="10"/>
    </location>
</feature>
<feature type="modified residue" description="Phosphoserine; by ATM and ATR" evidence="3">
    <location>
        <position position="135"/>
    </location>
</feature>
<organism>
    <name type="scientific">Oryza sativa subsp. indica</name>
    <name type="common">Rice</name>
    <dbReference type="NCBI Taxonomy" id="39946"/>
    <lineage>
        <taxon>Eukaryota</taxon>
        <taxon>Viridiplantae</taxon>
        <taxon>Streptophyta</taxon>
        <taxon>Embryophyta</taxon>
        <taxon>Tracheophyta</taxon>
        <taxon>Spermatophyta</taxon>
        <taxon>Magnoliopsida</taxon>
        <taxon>Liliopsida</taxon>
        <taxon>Poales</taxon>
        <taxon>Poaceae</taxon>
        <taxon>BOP clade</taxon>
        <taxon>Oryzoideae</taxon>
        <taxon>Oryzeae</taxon>
        <taxon>Oryzinae</taxon>
        <taxon>Oryza</taxon>
        <taxon>Oryza sativa</taxon>
    </lineage>
</organism>
<name>H2AXB_ORYSI</name>
<accession>A2ZL69</accession>
<sequence length="138" mass="14339">MSSAGGGGGRGKSKGSKSVSRSSKAGLQFPVGRIARYLKAGKYAERVGAGAPVYLSAVLEYLAAEVLELAGNAARDNKKNRIVPRHIQLAVRNDEELSRLLGAVTIAAGGVLPNIHQTLLPKKGGKDKADIGSASQEF</sequence>
<keyword id="KW-0158">Chromosome</keyword>
<keyword id="KW-0238">DNA-binding</keyword>
<keyword id="KW-0544">Nucleosome core</keyword>
<keyword id="KW-0539">Nucleus</keyword>
<keyword id="KW-0597">Phosphoprotein</keyword>
<keyword id="KW-1185">Reference proteome</keyword>
<dbReference type="EMBL" id="CM000137">
    <property type="protein sequence ID" value="EAY83353.1"/>
    <property type="molecule type" value="Genomic_DNA"/>
</dbReference>
<dbReference type="SMR" id="A2ZL69"/>
<dbReference type="STRING" id="39946.A2ZL69"/>
<dbReference type="iPTMnet" id="A2ZL69"/>
<dbReference type="EnsemblPlants" id="BGIOSGA036075-TA">
    <property type="protein sequence ID" value="BGIOSGA036075-PA"/>
    <property type="gene ID" value="BGIOSGA036075"/>
</dbReference>
<dbReference type="EnsemblPlants" id="OsGoSa_12g0015580.01">
    <property type="protein sequence ID" value="OsGoSa_12g0015580.01"/>
    <property type="gene ID" value="OsGoSa_12g0015580"/>
</dbReference>
<dbReference type="EnsemblPlants" id="OsIR64_12g0015120.01">
    <property type="protein sequence ID" value="OsIR64_12g0015120.01"/>
    <property type="gene ID" value="OsIR64_12g0015120"/>
</dbReference>
<dbReference type="EnsemblPlants" id="OsKYG_12g0015520.01">
    <property type="protein sequence ID" value="OsKYG_12g0015520.01"/>
    <property type="gene ID" value="OsKYG_12g0015520"/>
</dbReference>
<dbReference type="EnsemblPlants" id="OsLaMu_12g0015540.01">
    <property type="protein sequence ID" value="OsLaMu_12g0015540.01"/>
    <property type="gene ID" value="OsLaMu_12g0015540"/>
</dbReference>
<dbReference type="EnsemblPlants" id="OsLima_12g0015360.01">
    <property type="protein sequence ID" value="OsLima_12g0015360.01"/>
    <property type="gene ID" value="OsLima_12g0015360"/>
</dbReference>
<dbReference type="EnsemblPlants" id="OsLiXu_12g0015370.01">
    <property type="protein sequence ID" value="OsLiXu_12g0015370.01"/>
    <property type="gene ID" value="OsLiXu_12g0015370"/>
</dbReference>
<dbReference type="EnsemblPlants" id="OsMH63_12G015390_01">
    <property type="protein sequence ID" value="OsMH63_12G015390_01"/>
    <property type="gene ID" value="OsMH63_12G015390"/>
</dbReference>
<dbReference type="EnsemblPlants" id="OsPr106_12g0014980.01">
    <property type="protein sequence ID" value="OsPr106_12g0014980.01"/>
    <property type="gene ID" value="OsPr106_12g0014980"/>
</dbReference>
<dbReference type="EnsemblPlants" id="OsZS97_12G015150_01">
    <property type="protein sequence ID" value="OsZS97_12G015150_01"/>
    <property type="gene ID" value="OsZS97_12G015150"/>
</dbReference>
<dbReference type="Gramene" id="BGIOSGA036075-TA">
    <property type="protein sequence ID" value="BGIOSGA036075-PA"/>
    <property type="gene ID" value="BGIOSGA036075"/>
</dbReference>
<dbReference type="Gramene" id="OsGoSa_12g0015580.01">
    <property type="protein sequence ID" value="OsGoSa_12g0015580.01"/>
    <property type="gene ID" value="OsGoSa_12g0015580"/>
</dbReference>
<dbReference type="Gramene" id="OsIR64_12g0015120.01">
    <property type="protein sequence ID" value="OsIR64_12g0015120.01"/>
    <property type="gene ID" value="OsIR64_12g0015120"/>
</dbReference>
<dbReference type="Gramene" id="OsKYG_12g0015520.01">
    <property type="protein sequence ID" value="OsKYG_12g0015520.01"/>
    <property type="gene ID" value="OsKYG_12g0015520"/>
</dbReference>
<dbReference type="Gramene" id="OsLaMu_12g0015540.01">
    <property type="protein sequence ID" value="OsLaMu_12g0015540.01"/>
    <property type="gene ID" value="OsLaMu_12g0015540"/>
</dbReference>
<dbReference type="Gramene" id="OsLima_12g0015360.01">
    <property type="protein sequence ID" value="OsLima_12g0015360.01"/>
    <property type="gene ID" value="OsLima_12g0015360"/>
</dbReference>
<dbReference type="Gramene" id="OsLiXu_12g0015370.01">
    <property type="protein sequence ID" value="OsLiXu_12g0015370.01"/>
    <property type="gene ID" value="OsLiXu_12g0015370"/>
</dbReference>
<dbReference type="Gramene" id="OsMH63_12G015390_01">
    <property type="protein sequence ID" value="OsMH63_12G015390_01"/>
    <property type="gene ID" value="OsMH63_12G015390"/>
</dbReference>
<dbReference type="Gramene" id="OsPr106_12g0014980.01">
    <property type="protein sequence ID" value="OsPr106_12g0014980.01"/>
    <property type="gene ID" value="OsPr106_12g0014980"/>
</dbReference>
<dbReference type="Gramene" id="OsZS97_12G015150_01">
    <property type="protein sequence ID" value="OsZS97_12G015150_01"/>
    <property type="gene ID" value="OsZS97_12G015150"/>
</dbReference>
<dbReference type="HOGENOM" id="CLU_062828_3_0_1"/>
<dbReference type="OMA" id="YWARRTA"/>
<dbReference type="OrthoDB" id="9421954at2759"/>
<dbReference type="Proteomes" id="UP000007015">
    <property type="component" value="Chromosome 12"/>
</dbReference>
<dbReference type="GO" id="GO:0000786">
    <property type="term" value="C:nucleosome"/>
    <property type="evidence" value="ECO:0007669"/>
    <property type="project" value="UniProtKB-KW"/>
</dbReference>
<dbReference type="GO" id="GO:0005634">
    <property type="term" value="C:nucleus"/>
    <property type="evidence" value="ECO:0007669"/>
    <property type="project" value="UniProtKB-SubCell"/>
</dbReference>
<dbReference type="GO" id="GO:0003677">
    <property type="term" value="F:DNA binding"/>
    <property type="evidence" value="ECO:0007669"/>
    <property type="project" value="UniProtKB-KW"/>
</dbReference>
<dbReference type="GO" id="GO:0046982">
    <property type="term" value="F:protein heterodimerization activity"/>
    <property type="evidence" value="ECO:0007669"/>
    <property type="project" value="InterPro"/>
</dbReference>
<dbReference type="GO" id="GO:0030527">
    <property type="term" value="F:structural constituent of chromatin"/>
    <property type="evidence" value="ECO:0007669"/>
    <property type="project" value="InterPro"/>
</dbReference>
<dbReference type="CDD" id="cd00074">
    <property type="entry name" value="HFD_H2A"/>
    <property type="match status" value="1"/>
</dbReference>
<dbReference type="FunFam" id="1.10.20.10:FF:000009">
    <property type="entry name" value="Histone H2A"/>
    <property type="match status" value="1"/>
</dbReference>
<dbReference type="Gene3D" id="1.10.20.10">
    <property type="entry name" value="Histone, subunit A"/>
    <property type="match status" value="1"/>
</dbReference>
<dbReference type="InterPro" id="IPR009072">
    <property type="entry name" value="Histone-fold"/>
</dbReference>
<dbReference type="InterPro" id="IPR002119">
    <property type="entry name" value="Histone_H2A"/>
</dbReference>
<dbReference type="InterPro" id="IPR007125">
    <property type="entry name" value="Histone_H2A/H2B/H3"/>
</dbReference>
<dbReference type="InterPro" id="IPR032454">
    <property type="entry name" value="Histone_H2A_C"/>
</dbReference>
<dbReference type="InterPro" id="IPR032458">
    <property type="entry name" value="Histone_H2A_CS"/>
</dbReference>
<dbReference type="PANTHER" id="PTHR23430">
    <property type="entry name" value="HISTONE H2A"/>
    <property type="match status" value="1"/>
</dbReference>
<dbReference type="Pfam" id="PF00125">
    <property type="entry name" value="Histone"/>
    <property type="match status" value="1"/>
</dbReference>
<dbReference type="Pfam" id="PF16211">
    <property type="entry name" value="Histone_H2A_C"/>
    <property type="match status" value="1"/>
</dbReference>
<dbReference type="PRINTS" id="PR00620">
    <property type="entry name" value="HISTONEH2A"/>
</dbReference>
<dbReference type="SMART" id="SM00414">
    <property type="entry name" value="H2A"/>
    <property type="match status" value="1"/>
</dbReference>
<dbReference type="SUPFAM" id="SSF47113">
    <property type="entry name" value="Histone-fold"/>
    <property type="match status" value="1"/>
</dbReference>
<dbReference type="PROSITE" id="PS00046">
    <property type="entry name" value="HISTONE_H2A"/>
    <property type="match status" value="1"/>
</dbReference>
<gene>
    <name type="ORF">OsI_037312</name>
</gene>
<reference key="1">
    <citation type="journal article" date="2005" name="PLoS Biol.">
        <title>The genomes of Oryza sativa: a history of duplications.</title>
        <authorList>
            <person name="Yu J."/>
            <person name="Wang J."/>
            <person name="Lin W."/>
            <person name="Li S."/>
            <person name="Li H."/>
            <person name="Zhou J."/>
            <person name="Ni P."/>
            <person name="Dong W."/>
            <person name="Hu S."/>
            <person name="Zeng C."/>
            <person name="Zhang J."/>
            <person name="Zhang Y."/>
            <person name="Li R."/>
            <person name="Xu Z."/>
            <person name="Li S."/>
            <person name="Li X."/>
            <person name="Zheng H."/>
            <person name="Cong L."/>
            <person name="Lin L."/>
            <person name="Yin J."/>
            <person name="Geng J."/>
            <person name="Li G."/>
            <person name="Shi J."/>
            <person name="Liu J."/>
            <person name="Lv H."/>
            <person name="Li J."/>
            <person name="Wang J."/>
            <person name="Deng Y."/>
            <person name="Ran L."/>
            <person name="Shi X."/>
            <person name="Wang X."/>
            <person name="Wu Q."/>
            <person name="Li C."/>
            <person name="Ren X."/>
            <person name="Wang J."/>
            <person name="Wang X."/>
            <person name="Li D."/>
            <person name="Liu D."/>
            <person name="Zhang X."/>
            <person name="Ji Z."/>
            <person name="Zhao W."/>
            <person name="Sun Y."/>
            <person name="Zhang Z."/>
            <person name="Bao J."/>
            <person name="Han Y."/>
            <person name="Dong L."/>
            <person name="Ji J."/>
            <person name="Chen P."/>
            <person name="Wu S."/>
            <person name="Liu J."/>
            <person name="Xiao Y."/>
            <person name="Bu D."/>
            <person name="Tan J."/>
            <person name="Yang L."/>
            <person name="Ye C."/>
            <person name="Zhang J."/>
            <person name="Xu J."/>
            <person name="Zhou Y."/>
            <person name="Yu Y."/>
            <person name="Zhang B."/>
            <person name="Zhuang S."/>
            <person name="Wei H."/>
            <person name="Liu B."/>
            <person name="Lei M."/>
            <person name="Yu H."/>
            <person name="Li Y."/>
            <person name="Xu H."/>
            <person name="Wei S."/>
            <person name="He X."/>
            <person name="Fang L."/>
            <person name="Zhang Z."/>
            <person name="Zhang Y."/>
            <person name="Huang X."/>
            <person name="Su Z."/>
            <person name="Tong W."/>
            <person name="Li J."/>
            <person name="Tong Z."/>
            <person name="Li S."/>
            <person name="Ye J."/>
            <person name="Wang L."/>
            <person name="Fang L."/>
            <person name="Lei T."/>
            <person name="Chen C.-S."/>
            <person name="Chen H.-C."/>
            <person name="Xu Z."/>
            <person name="Li H."/>
            <person name="Huang H."/>
            <person name="Zhang F."/>
            <person name="Xu H."/>
            <person name="Li N."/>
            <person name="Zhao C."/>
            <person name="Li S."/>
            <person name="Dong L."/>
            <person name="Huang Y."/>
            <person name="Li L."/>
            <person name="Xi Y."/>
            <person name="Qi Q."/>
            <person name="Li W."/>
            <person name="Zhang B."/>
            <person name="Hu W."/>
            <person name="Zhang Y."/>
            <person name="Tian X."/>
            <person name="Jiao Y."/>
            <person name="Liang X."/>
            <person name="Jin J."/>
            <person name="Gao L."/>
            <person name="Zheng W."/>
            <person name="Hao B."/>
            <person name="Liu S.-M."/>
            <person name="Wang W."/>
            <person name="Yuan L."/>
            <person name="Cao M."/>
            <person name="McDermott J."/>
            <person name="Samudrala R."/>
            <person name="Wang J."/>
            <person name="Wong G.K.-S."/>
            <person name="Yang H."/>
        </authorList>
    </citation>
    <scope>NUCLEOTIDE SEQUENCE [LARGE SCALE GENOMIC DNA]</scope>
    <source>
        <strain>cv. 93-11</strain>
    </source>
</reference>